<comment type="function">
    <text evidence="1">One of the primary rRNA binding proteins. Required for association of the 30S and 50S subunits to form the 70S ribosome, for tRNA binding and peptide bond formation. It has been suggested to have peptidyltransferase activity; this is somewhat controversial. Makes several contacts with the 16S rRNA in the 70S ribosome.</text>
</comment>
<comment type="subunit">
    <text evidence="1">Part of the 50S ribosomal subunit. Forms a bridge to the 30S subunit in the 70S ribosome.</text>
</comment>
<comment type="similarity">
    <text evidence="1">Belongs to the universal ribosomal protein uL2 family.</text>
</comment>
<feature type="chain" id="PRO_0000237189" description="Large ribosomal subunit protein uL2">
    <location>
        <begin position="1"/>
        <end position="276"/>
    </location>
</feature>
<feature type="region of interest" description="Disordered" evidence="2">
    <location>
        <begin position="224"/>
        <end position="276"/>
    </location>
</feature>
<feature type="compositionally biased region" description="Basic residues" evidence="2">
    <location>
        <begin position="258"/>
        <end position="276"/>
    </location>
</feature>
<organism>
    <name type="scientific">Geobacillus kaustophilus (strain HTA426)</name>
    <dbReference type="NCBI Taxonomy" id="235909"/>
    <lineage>
        <taxon>Bacteria</taxon>
        <taxon>Bacillati</taxon>
        <taxon>Bacillota</taxon>
        <taxon>Bacilli</taxon>
        <taxon>Bacillales</taxon>
        <taxon>Anoxybacillaceae</taxon>
        <taxon>Geobacillus</taxon>
        <taxon>Geobacillus thermoleovorans group</taxon>
    </lineage>
</organism>
<reference key="1">
    <citation type="journal article" date="2004" name="Nucleic Acids Res.">
        <title>Thermoadaptation trait revealed by the genome sequence of thermophilic Geobacillus kaustophilus.</title>
        <authorList>
            <person name="Takami H."/>
            <person name="Takaki Y."/>
            <person name="Chee G.-J."/>
            <person name="Nishi S."/>
            <person name="Shimamura S."/>
            <person name="Suzuki H."/>
            <person name="Matsui S."/>
            <person name="Uchiyama I."/>
        </authorList>
    </citation>
    <scope>NUCLEOTIDE SEQUENCE [LARGE SCALE GENOMIC DNA]</scope>
    <source>
        <strain>HTA426</strain>
    </source>
</reference>
<gene>
    <name evidence="1" type="primary">rplB</name>
    <name type="ordered locus">GK0109</name>
</gene>
<accession>Q5L3Z4</accession>
<sequence>MAIKKYKPTSNGRRGMTVLDFSEITTDQPEKSLLAPLKKKAGRNNQGKITVRHQGGGHKRQYRIIDFKRDKDGIPGRVATIEYDPNRSANIALINYADGEKRYIIAPKNLKVGMEIMSGPDADIKIGNALPLENIPVGTLVHNIELKPGRGGQLVRAAGTSAQVLGKEGKYVIVRLASGEVRMILGKCRATVGEVGNEQHELVNIGKAGRARWLGIRPTVRGSVMNPVDHPHGGGEGKAPIGRKSPMTPWGKPTLGYKTRKKKNKSDKFIIRRRKK</sequence>
<proteinExistence type="evidence at protein level"/>
<keyword id="KW-0002">3D-structure</keyword>
<keyword id="KW-1185">Reference proteome</keyword>
<keyword id="KW-0687">Ribonucleoprotein</keyword>
<keyword id="KW-0689">Ribosomal protein</keyword>
<keyword id="KW-0694">RNA-binding</keyword>
<keyword id="KW-0699">rRNA-binding</keyword>
<name>RL2_GEOKA</name>
<evidence type="ECO:0000255" key="1">
    <source>
        <dbReference type="HAMAP-Rule" id="MF_01320"/>
    </source>
</evidence>
<evidence type="ECO:0000256" key="2">
    <source>
        <dbReference type="SAM" id="MobiDB-lite"/>
    </source>
</evidence>
<evidence type="ECO:0000305" key="3"/>
<protein>
    <recommendedName>
        <fullName evidence="1">Large ribosomal subunit protein uL2</fullName>
    </recommendedName>
    <alternativeName>
        <fullName evidence="3">50S ribosomal protein L2</fullName>
    </alternativeName>
</protein>
<dbReference type="EMBL" id="BA000043">
    <property type="protein sequence ID" value="BAD74394.1"/>
    <property type="molecule type" value="Genomic_DNA"/>
</dbReference>
<dbReference type="RefSeq" id="WP_011229623.1">
    <property type="nucleotide sequence ID" value="NC_006510.1"/>
</dbReference>
<dbReference type="PDB" id="1ML5">
    <property type="method" value="EM"/>
    <property type="resolution" value="14.00 A"/>
    <property type="chains" value="d=61-197"/>
</dbReference>
<dbReference type="PDB" id="4V4R">
    <property type="method" value="X-ray"/>
    <property type="resolution" value="5.90 A"/>
    <property type="chains" value="BD=61-233"/>
</dbReference>
<dbReference type="PDB" id="4V4S">
    <property type="method" value="X-ray"/>
    <property type="resolution" value="6.76 A"/>
    <property type="chains" value="BD=61-233"/>
</dbReference>
<dbReference type="PDB" id="4V4T">
    <property type="method" value="X-ray"/>
    <property type="resolution" value="6.46 A"/>
    <property type="chains" value="BD=61-233"/>
</dbReference>
<dbReference type="PDBsum" id="1ML5"/>
<dbReference type="PDBsum" id="4V4R"/>
<dbReference type="PDBsum" id="4V4S"/>
<dbReference type="PDBsum" id="4V4T"/>
<dbReference type="SMR" id="Q5L3Z4"/>
<dbReference type="STRING" id="235909.GK0109"/>
<dbReference type="GeneID" id="89612897"/>
<dbReference type="KEGG" id="gka:GK0109"/>
<dbReference type="eggNOG" id="COG0090">
    <property type="taxonomic scope" value="Bacteria"/>
</dbReference>
<dbReference type="HOGENOM" id="CLU_036235_2_1_9"/>
<dbReference type="Proteomes" id="UP000001172">
    <property type="component" value="Chromosome"/>
</dbReference>
<dbReference type="GO" id="GO:0015934">
    <property type="term" value="C:large ribosomal subunit"/>
    <property type="evidence" value="ECO:0007669"/>
    <property type="project" value="InterPro"/>
</dbReference>
<dbReference type="GO" id="GO:0019843">
    <property type="term" value="F:rRNA binding"/>
    <property type="evidence" value="ECO:0007669"/>
    <property type="project" value="UniProtKB-UniRule"/>
</dbReference>
<dbReference type="GO" id="GO:0003735">
    <property type="term" value="F:structural constituent of ribosome"/>
    <property type="evidence" value="ECO:0007669"/>
    <property type="project" value="InterPro"/>
</dbReference>
<dbReference type="GO" id="GO:0016740">
    <property type="term" value="F:transferase activity"/>
    <property type="evidence" value="ECO:0007669"/>
    <property type="project" value="InterPro"/>
</dbReference>
<dbReference type="GO" id="GO:0002181">
    <property type="term" value="P:cytoplasmic translation"/>
    <property type="evidence" value="ECO:0007669"/>
    <property type="project" value="TreeGrafter"/>
</dbReference>
<dbReference type="FunFam" id="2.30.30.30:FF:000001">
    <property type="entry name" value="50S ribosomal protein L2"/>
    <property type="match status" value="1"/>
</dbReference>
<dbReference type="FunFam" id="2.40.50.140:FF:000003">
    <property type="entry name" value="50S ribosomal protein L2"/>
    <property type="match status" value="1"/>
</dbReference>
<dbReference type="FunFam" id="4.10.950.10:FF:000001">
    <property type="entry name" value="50S ribosomal protein L2"/>
    <property type="match status" value="1"/>
</dbReference>
<dbReference type="Gene3D" id="2.30.30.30">
    <property type="match status" value="1"/>
</dbReference>
<dbReference type="Gene3D" id="2.40.50.140">
    <property type="entry name" value="Nucleic acid-binding proteins"/>
    <property type="match status" value="1"/>
</dbReference>
<dbReference type="Gene3D" id="4.10.950.10">
    <property type="entry name" value="Ribosomal protein L2, domain 3"/>
    <property type="match status" value="1"/>
</dbReference>
<dbReference type="HAMAP" id="MF_01320_B">
    <property type="entry name" value="Ribosomal_uL2_B"/>
    <property type="match status" value="1"/>
</dbReference>
<dbReference type="InterPro" id="IPR012340">
    <property type="entry name" value="NA-bd_OB-fold"/>
</dbReference>
<dbReference type="InterPro" id="IPR014722">
    <property type="entry name" value="Rib_uL2_dom2"/>
</dbReference>
<dbReference type="InterPro" id="IPR002171">
    <property type="entry name" value="Ribosomal_uL2"/>
</dbReference>
<dbReference type="InterPro" id="IPR005880">
    <property type="entry name" value="Ribosomal_uL2_bac/org-type"/>
</dbReference>
<dbReference type="InterPro" id="IPR022669">
    <property type="entry name" value="Ribosomal_uL2_C"/>
</dbReference>
<dbReference type="InterPro" id="IPR022671">
    <property type="entry name" value="Ribosomal_uL2_CS"/>
</dbReference>
<dbReference type="InterPro" id="IPR014726">
    <property type="entry name" value="Ribosomal_uL2_dom3"/>
</dbReference>
<dbReference type="InterPro" id="IPR022666">
    <property type="entry name" value="Ribosomal_uL2_RNA-bd_dom"/>
</dbReference>
<dbReference type="InterPro" id="IPR008991">
    <property type="entry name" value="Translation_prot_SH3-like_sf"/>
</dbReference>
<dbReference type="NCBIfam" id="TIGR01171">
    <property type="entry name" value="rplB_bact"/>
    <property type="match status" value="1"/>
</dbReference>
<dbReference type="PANTHER" id="PTHR13691:SF5">
    <property type="entry name" value="LARGE RIBOSOMAL SUBUNIT PROTEIN UL2M"/>
    <property type="match status" value="1"/>
</dbReference>
<dbReference type="PANTHER" id="PTHR13691">
    <property type="entry name" value="RIBOSOMAL PROTEIN L2"/>
    <property type="match status" value="1"/>
</dbReference>
<dbReference type="Pfam" id="PF00181">
    <property type="entry name" value="Ribosomal_L2"/>
    <property type="match status" value="1"/>
</dbReference>
<dbReference type="Pfam" id="PF03947">
    <property type="entry name" value="Ribosomal_L2_C"/>
    <property type="match status" value="1"/>
</dbReference>
<dbReference type="PIRSF" id="PIRSF002158">
    <property type="entry name" value="Ribosomal_L2"/>
    <property type="match status" value="1"/>
</dbReference>
<dbReference type="SMART" id="SM01383">
    <property type="entry name" value="Ribosomal_L2"/>
    <property type="match status" value="1"/>
</dbReference>
<dbReference type="SMART" id="SM01382">
    <property type="entry name" value="Ribosomal_L2_C"/>
    <property type="match status" value="1"/>
</dbReference>
<dbReference type="SUPFAM" id="SSF50249">
    <property type="entry name" value="Nucleic acid-binding proteins"/>
    <property type="match status" value="1"/>
</dbReference>
<dbReference type="SUPFAM" id="SSF50104">
    <property type="entry name" value="Translation proteins SH3-like domain"/>
    <property type="match status" value="1"/>
</dbReference>
<dbReference type="PROSITE" id="PS00467">
    <property type="entry name" value="RIBOSOMAL_L2"/>
    <property type="match status" value="1"/>
</dbReference>